<reference key="1">
    <citation type="journal article" date="1995" name="Science">
        <title>Whole-genome random sequencing and assembly of Haemophilus influenzae Rd.</title>
        <authorList>
            <person name="Fleischmann R.D."/>
            <person name="Adams M.D."/>
            <person name="White O."/>
            <person name="Clayton R.A."/>
            <person name="Kirkness E.F."/>
            <person name="Kerlavage A.R."/>
            <person name="Bult C.J."/>
            <person name="Tomb J.-F."/>
            <person name="Dougherty B.A."/>
            <person name="Merrick J.M."/>
            <person name="McKenney K."/>
            <person name="Sutton G.G."/>
            <person name="FitzHugh W."/>
            <person name="Fields C.A."/>
            <person name="Gocayne J.D."/>
            <person name="Scott J.D."/>
            <person name="Shirley R."/>
            <person name="Liu L.-I."/>
            <person name="Glodek A."/>
            <person name="Kelley J.M."/>
            <person name="Weidman J.F."/>
            <person name="Phillips C.A."/>
            <person name="Spriggs T."/>
            <person name="Hedblom E."/>
            <person name="Cotton M.D."/>
            <person name="Utterback T.R."/>
            <person name="Hanna M.C."/>
            <person name="Nguyen D.T."/>
            <person name="Saudek D.M."/>
            <person name="Brandon R.C."/>
            <person name="Fine L.D."/>
            <person name="Fritchman J.L."/>
            <person name="Fuhrmann J.L."/>
            <person name="Geoghagen N.S.M."/>
            <person name="Gnehm C.L."/>
            <person name="McDonald L.A."/>
            <person name="Small K.V."/>
            <person name="Fraser C.M."/>
            <person name="Smith H.O."/>
            <person name="Venter J.C."/>
        </authorList>
    </citation>
    <scope>NUCLEOTIDE SEQUENCE [LARGE SCALE GENOMIC DNA]</scope>
    <source>
        <strain>ATCC 51907 / DSM 11121 / KW20 / Rd</strain>
    </source>
</reference>
<feature type="chain" id="PRO_0000156574" description="Homoserine kinase">
    <location>
        <begin position="1"/>
        <end position="314"/>
    </location>
</feature>
<feature type="binding site" evidence="1">
    <location>
        <begin position="96"/>
        <end position="106"/>
    </location>
    <ligand>
        <name>ATP</name>
        <dbReference type="ChEBI" id="CHEBI:30616"/>
    </ligand>
</feature>
<name>KHSE_HAEIN</name>
<dbReference type="EC" id="2.7.1.39" evidence="1"/>
<dbReference type="EMBL" id="L42023">
    <property type="protein sequence ID" value="AAC21766.1"/>
    <property type="molecule type" value="Genomic_DNA"/>
</dbReference>
<dbReference type="PIR" id="I64047">
    <property type="entry name" value="I64047"/>
</dbReference>
<dbReference type="RefSeq" id="NP_438261.1">
    <property type="nucleotide sequence ID" value="NC_000907.1"/>
</dbReference>
<dbReference type="SMR" id="P44504"/>
<dbReference type="STRING" id="71421.HI_0088"/>
<dbReference type="DNASU" id="950993"/>
<dbReference type="EnsemblBacteria" id="AAC21766">
    <property type="protein sequence ID" value="AAC21766"/>
    <property type="gene ID" value="HI_0088"/>
</dbReference>
<dbReference type="KEGG" id="hin:HI_0088"/>
<dbReference type="PATRIC" id="fig|71421.8.peg.89"/>
<dbReference type="eggNOG" id="COG0083">
    <property type="taxonomic scope" value="Bacteria"/>
</dbReference>
<dbReference type="HOGENOM" id="CLU_041243_1_1_6"/>
<dbReference type="OrthoDB" id="9769912at2"/>
<dbReference type="PhylomeDB" id="P44504"/>
<dbReference type="BioCyc" id="HINF71421:G1GJ1-93-MONOMER"/>
<dbReference type="UniPathway" id="UPA00050">
    <property type="reaction ID" value="UER00064"/>
</dbReference>
<dbReference type="Proteomes" id="UP000000579">
    <property type="component" value="Chromosome"/>
</dbReference>
<dbReference type="GO" id="GO:0005737">
    <property type="term" value="C:cytoplasm"/>
    <property type="evidence" value="ECO:0007669"/>
    <property type="project" value="UniProtKB-SubCell"/>
</dbReference>
<dbReference type="GO" id="GO:0005524">
    <property type="term" value="F:ATP binding"/>
    <property type="evidence" value="ECO:0007669"/>
    <property type="project" value="UniProtKB-UniRule"/>
</dbReference>
<dbReference type="GO" id="GO:0004413">
    <property type="term" value="F:homoserine kinase activity"/>
    <property type="evidence" value="ECO:0007669"/>
    <property type="project" value="UniProtKB-UniRule"/>
</dbReference>
<dbReference type="GO" id="GO:0009088">
    <property type="term" value="P:threonine biosynthetic process"/>
    <property type="evidence" value="ECO:0007669"/>
    <property type="project" value="UniProtKB-UniRule"/>
</dbReference>
<dbReference type="Gene3D" id="3.30.230.10">
    <property type="match status" value="1"/>
</dbReference>
<dbReference type="Gene3D" id="3.30.70.890">
    <property type="entry name" value="GHMP kinase, C-terminal domain"/>
    <property type="match status" value="1"/>
</dbReference>
<dbReference type="HAMAP" id="MF_00384">
    <property type="entry name" value="Homoser_kinase"/>
    <property type="match status" value="1"/>
</dbReference>
<dbReference type="InterPro" id="IPR013750">
    <property type="entry name" value="GHMP_kinase_C_dom"/>
</dbReference>
<dbReference type="InterPro" id="IPR036554">
    <property type="entry name" value="GHMP_kinase_C_sf"/>
</dbReference>
<dbReference type="InterPro" id="IPR006204">
    <property type="entry name" value="GHMP_kinase_N_dom"/>
</dbReference>
<dbReference type="InterPro" id="IPR006203">
    <property type="entry name" value="GHMP_knse_ATP-bd_CS"/>
</dbReference>
<dbReference type="InterPro" id="IPR000870">
    <property type="entry name" value="Homoserine_kinase"/>
</dbReference>
<dbReference type="InterPro" id="IPR020568">
    <property type="entry name" value="Ribosomal_Su5_D2-typ_SF"/>
</dbReference>
<dbReference type="InterPro" id="IPR014721">
    <property type="entry name" value="Ribsml_uS5_D2-typ_fold_subgr"/>
</dbReference>
<dbReference type="NCBIfam" id="NF002288">
    <property type="entry name" value="PRK01212.1-4"/>
    <property type="match status" value="1"/>
</dbReference>
<dbReference type="NCBIfam" id="TIGR00191">
    <property type="entry name" value="thrB"/>
    <property type="match status" value="1"/>
</dbReference>
<dbReference type="PANTHER" id="PTHR20861:SF1">
    <property type="entry name" value="HOMOSERINE KINASE"/>
    <property type="match status" value="1"/>
</dbReference>
<dbReference type="PANTHER" id="PTHR20861">
    <property type="entry name" value="HOMOSERINE/4-DIPHOSPHOCYTIDYL-2-C-METHYL-D-ERYTHRITOL KINASE"/>
    <property type="match status" value="1"/>
</dbReference>
<dbReference type="Pfam" id="PF08544">
    <property type="entry name" value="GHMP_kinases_C"/>
    <property type="match status" value="1"/>
</dbReference>
<dbReference type="Pfam" id="PF00288">
    <property type="entry name" value="GHMP_kinases_N"/>
    <property type="match status" value="1"/>
</dbReference>
<dbReference type="PIRSF" id="PIRSF000676">
    <property type="entry name" value="Homoser_kin"/>
    <property type="match status" value="1"/>
</dbReference>
<dbReference type="PRINTS" id="PR00958">
    <property type="entry name" value="HOMSERKINASE"/>
</dbReference>
<dbReference type="SUPFAM" id="SSF55060">
    <property type="entry name" value="GHMP Kinase, C-terminal domain"/>
    <property type="match status" value="1"/>
</dbReference>
<dbReference type="SUPFAM" id="SSF54211">
    <property type="entry name" value="Ribosomal protein S5 domain 2-like"/>
    <property type="match status" value="1"/>
</dbReference>
<dbReference type="PROSITE" id="PS00627">
    <property type="entry name" value="GHMP_KINASES_ATP"/>
    <property type="match status" value="1"/>
</dbReference>
<keyword id="KW-0028">Amino-acid biosynthesis</keyword>
<keyword id="KW-0067">ATP-binding</keyword>
<keyword id="KW-0963">Cytoplasm</keyword>
<keyword id="KW-0418">Kinase</keyword>
<keyword id="KW-0547">Nucleotide-binding</keyword>
<keyword id="KW-1185">Reference proteome</keyword>
<keyword id="KW-0791">Threonine biosynthesis</keyword>
<keyword id="KW-0808">Transferase</keyword>
<proteinExistence type="inferred from homology"/>
<accession>P44504</accession>
<gene>
    <name evidence="1" type="primary">thrB</name>
    <name type="ordered locus">HI_0088</name>
</gene>
<protein>
    <recommendedName>
        <fullName evidence="1">Homoserine kinase</fullName>
        <shortName evidence="1">HK</shortName>
        <shortName evidence="1">HSK</shortName>
        <ecNumber evidence="1">2.7.1.39</ecNumber>
    </recommendedName>
</protein>
<comment type="function">
    <text evidence="1">Catalyzes the ATP-dependent phosphorylation of L-homoserine to L-homoserine phosphate.</text>
</comment>
<comment type="catalytic activity">
    <reaction evidence="1">
        <text>L-homoserine + ATP = O-phospho-L-homoserine + ADP + H(+)</text>
        <dbReference type="Rhea" id="RHEA:13985"/>
        <dbReference type="ChEBI" id="CHEBI:15378"/>
        <dbReference type="ChEBI" id="CHEBI:30616"/>
        <dbReference type="ChEBI" id="CHEBI:57476"/>
        <dbReference type="ChEBI" id="CHEBI:57590"/>
        <dbReference type="ChEBI" id="CHEBI:456216"/>
        <dbReference type="EC" id="2.7.1.39"/>
    </reaction>
</comment>
<comment type="pathway">
    <text evidence="1">Amino-acid biosynthesis; L-threonine biosynthesis; L-threonine from L-aspartate: step 4/5.</text>
</comment>
<comment type="subcellular location">
    <subcellularLocation>
        <location evidence="1">Cytoplasm</location>
    </subcellularLocation>
</comment>
<comment type="similarity">
    <text evidence="1">Belongs to the GHMP kinase family. Homoserine kinase subfamily.</text>
</comment>
<organism>
    <name type="scientific">Haemophilus influenzae (strain ATCC 51907 / DSM 11121 / KW20 / Rd)</name>
    <dbReference type="NCBI Taxonomy" id="71421"/>
    <lineage>
        <taxon>Bacteria</taxon>
        <taxon>Pseudomonadati</taxon>
        <taxon>Pseudomonadota</taxon>
        <taxon>Gammaproteobacteria</taxon>
        <taxon>Pasteurellales</taxon>
        <taxon>Pasteurellaceae</taxon>
        <taxon>Haemophilus</taxon>
    </lineage>
</organism>
<evidence type="ECO:0000255" key="1">
    <source>
        <dbReference type="HAMAP-Rule" id="MF_00384"/>
    </source>
</evidence>
<sequence>MLRIYAPASSANISVGFDTLGAAISPIDGSLLGDVVQIESISTGFELESAGYFVRKLPKEPQKNIVYQAYVLFSEQLKLRGANVKPLRLTLEKNMPIGSGLGSSACSIVAALVALNQFHNEPFSKMELLEMMGELEGRISGSIHYDNVAPCYLGGVQFMVQSLGNICQKLPFFDNWYWVLAYPGIEVSTAEARAILPKSYTRQNVIAHGRHLGGFVHACHTHQENLAAIMMKDVIAEPYRESLLPNFAEVKQATRDLGALATGISGSGPTIFSIAPDLQTAIKLSSYLESHYLQNNEGFVHVCKVDNEGTREIK</sequence>